<protein>
    <recommendedName>
        <fullName>NAD(P)H-quinone oxidoreductase subunit 6, organellar chromatophore</fullName>
        <ecNumber>7.1.1.-</ecNumber>
    </recommendedName>
    <alternativeName>
        <fullName>NAD(P)H dehydrogenase subunit 6</fullName>
    </alternativeName>
    <alternativeName>
        <fullName>NADH-plastoquinone oxidoreductase subunit 6</fullName>
    </alternativeName>
</protein>
<keyword id="KW-0472">Membrane</keyword>
<keyword id="KW-0520">NAD</keyword>
<keyword id="KW-0521">NADP</keyword>
<keyword id="KW-0994">Organellar chromatophore</keyword>
<keyword id="KW-0934">Plastid</keyword>
<keyword id="KW-0618">Plastoquinone</keyword>
<keyword id="KW-0874">Quinone</keyword>
<keyword id="KW-0793">Thylakoid</keyword>
<keyword id="KW-1278">Translocase</keyword>
<keyword id="KW-0812">Transmembrane</keyword>
<keyword id="KW-1133">Transmembrane helix</keyword>
<keyword id="KW-0813">Transport</keyword>
<reference key="1">
    <citation type="journal article" date="2008" name="Curr. Biol.">
        <title>Chromatophore genome sequence of Paulinella sheds light on acquisition of photosynthesis by eukaryotes.</title>
        <authorList>
            <person name="Nowack E.C.M."/>
            <person name="Melkonian M."/>
            <person name="Gloeckner G."/>
        </authorList>
    </citation>
    <scope>NUCLEOTIDE SEQUENCE [LARGE SCALE GENOMIC DNA]</scope>
</reference>
<geneLocation type="organellar chromatophore"/>
<dbReference type="EC" id="7.1.1.-"/>
<dbReference type="EMBL" id="CP000815">
    <property type="protein sequence ID" value="ACB42765.1"/>
    <property type="molecule type" value="Genomic_DNA"/>
</dbReference>
<dbReference type="RefSeq" id="YP_002048975.1">
    <property type="nucleotide sequence ID" value="NC_011087.1"/>
</dbReference>
<dbReference type="SMR" id="B1X496"/>
<dbReference type="GeneID" id="6481774"/>
<dbReference type="GO" id="GO:0070118">
    <property type="term" value="C:organellar chromatophore thylakoid membrane"/>
    <property type="evidence" value="ECO:0007669"/>
    <property type="project" value="UniProtKB-SubCell"/>
</dbReference>
<dbReference type="GO" id="GO:0009536">
    <property type="term" value="C:plastid"/>
    <property type="evidence" value="ECO:0007669"/>
    <property type="project" value="UniProtKB-KW"/>
</dbReference>
<dbReference type="GO" id="GO:0008137">
    <property type="term" value="F:NADH dehydrogenase (ubiquinone) activity"/>
    <property type="evidence" value="ECO:0007669"/>
    <property type="project" value="InterPro"/>
</dbReference>
<dbReference type="GO" id="GO:0048038">
    <property type="term" value="F:quinone binding"/>
    <property type="evidence" value="ECO:0007669"/>
    <property type="project" value="UniProtKB-KW"/>
</dbReference>
<dbReference type="Gene3D" id="1.20.120.1200">
    <property type="entry name" value="NADH-ubiquinone/plastoquinone oxidoreductase chain 6, subunit NuoJ"/>
    <property type="match status" value="1"/>
</dbReference>
<dbReference type="InterPro" id="IPR001457">
    <property type="entry name" value="NADH_UbQ/plastoQ_OxRdtase_su6"/>
</dbReference>
<dbReference type="InterPro" id="IPR042106">
    <property type="entry name" value="Nuo/plastoQ_OxRdtase_6_NuoJ"/>
</dbReference>
<dbReference type="NCBIfam" id="NF005163">
    <property type="entry name" value="PRK06638.1-3"/>
    <property type="match status" value="1"/>
</dbReference>
<dbReference type="PANTHER" id="PTHR33269">
    <property type="entry name" value="NADH-UBIQUINONE OXIDOREDUCTASE CHAIN 6"/>
    <property type="match status" value="1"/>
</dbReference>
<dbReference type="PANTHER" id="PTHR33269:SF17">
    <property type="entry name" value="NADH-UBIQUINONE OXIDOREDUCTASE CHAIN 6"/>
    <property type="match status" value="1"/>
</dbReference>
<dbReference type="Pfam" id="PF00499">
    <property type="entry name" value="Oxidored_q3"/>
    <property type="match status" value="1"/>
</dbReference>
<gene>
    <name type="primary">ndhG</name>
    <name type="ordered locus">PCC_0324</name>
</gene>
<name>NU6C_PAUCH</name>
<accession>B1X496</accession>
<organism>
    <name type="scientific">Paulinella chromatophora</name>
    <dbReference type="NCBI Taxonomy" id="39717"/>
    <lineage>
        <taxon>Eukaryota</taxon>
        <taxon>Sar</taxon>
        <taxon>Rhizaria</taxon>
        <taxon>Cercozoa</taxon>
        <taxon>Imbricatea</taxon>
        <taxon>Silicofilosea</taxon>
        <taxon>Euglyphida</taxon>
        <taxon>Paulinellidae</taxon>
        <taxon>Paulinella</taxon>
    </lineage>
</organism>
<sequence length="205" mass="22325">MTISNATQLICFFALSATLILGALGVVLLPNIVYSAFLLGSVFLSVAGLYLLLNASFVAAAQVLIYVGAVNVLILFAIMLVNREEELKVIPGLAIRRFFSGVVCMGLLVILERIATTTHWAQVGPIPLGEEATIRIGEHLFSDYLLPFELASILLLIAMIGAIVLARKDLVDLKPIIEQRIDPKEIKLPSSSMFRKKSKKLTDMG</sequence>
<proteinExistence type="inferred from homology"/>
<comment type="function">
    <text evidence="1">NDH shuttles electrons from NAD(P)H:plastoquinone, via FMN and iron-sulfur (Fe-S) centers, to quinones in the photosynthetic chain and possibly in a chloroplast respiratory chain. The immediate electron acceptor for the enzyme in this species is believed to be plastoquinone. Couples the redox reaction to proton translocation, and thus conserves the redox energy in a proton gradient (By similarity).</text>
</comment>
<comment type="catalytic activity">
    <reaction>
        <text>a plastoquinone + NADH + (n+1) H(+)(in) = a plastoquinol + NAD(+) + n H(+)(out)</text>
        <dbReference type="Rhea" id="RHEA:42608"/>
        <dbReference type="Rhea" id="RHEA-COMP:9561"/>
        <dbReference type="Rhea" id="RHEA-COMP:9562"/>
        <dbReference type="ChEBI" id="CHEBI:15378"/>
        <dbReference type="ChEBI" id="CHEBI:17757"/>
        <dbReference type="ChEBI" id="CHEBI:57540"/>
        <dbReference type="ChEBI" id="CHEBI:57945"/>
        <dbReference type="ChEBI" id="CHEBI:62192"/>
    </reaction>
</comment>
<comment type="catalytic activity">
    <reaction>
        <text>a plastoquinone + NADPH + (n+1) H(+)(in) = a plastoquinol + NADP(+) + n H(+)(out)</text>
        <dbReference type="Rhea" id="RHEA:42612"/>
        <dbReference type="Rhea" id="RHEA-COMP:9561"/>
        <dbReference type="Rhea" id="RHEA-COMP:9562"/>
        <dbReference type="ChEBI" id="CHEBI:15378"/>
        <dbReference type="ChEBI" id="CHEBI:17757"/>
        <dbReference type="ChEBI" id="CHEBI:57783"/>
        <dbReference type="ChEBI" id="CHEBI:58349"/>
        <dbReference type="ChEBI" id="CHEBI:62192"/>
    </reaction>
</comment>
<comment type="subunit">
    <text evidence="1">NDH is composed of at least 16 different subunits, 5 of which are encoded in the nucleus.</text>
</comment>
<comment type="subcellular location">
    <subcellularLocation>
        <location evidence="1">Plastid</location>
        <location evidence="1">Organellar chromatophore thylakoid membrane</location>
        <topology evidence="1">Multi-pass membrane protein</topology>
    </subcellularLocation>
</comment>
<comment type="similarity">
    <text evidence="3">Belongs to the complex I subunit 6 family.</text>
</comment>
<evidence type="ECO:0000250" key="1"/>
<evidence type="ECO:0000255" key="2"/>
<evidence type="ECO:0000305" key="3"/>
<feature type="chain" id="PRO_0000360297" description="NAD(P)H-quinone oxidoreductase subunit 6, organellar chromatophore">
    <location>
        <begin position="1"/>
        <end position="205"/>
    </location>
</feature>
<feature type="transmembrane region" description="Helical" evidence="2">
    <location>
        <begin position="9"/>
        <end position="29"/>
    </location>
</feature>
<feature type="transmembrane region" description="Helical" evidence="2">
    <location>
        <begin position="32"/>
        <end position="52"/>
    </location>
</feature>
<feature type="transmembrane region" description="Helical" evidence="2">
    <location>
        <begin position="61"/>
        <end position="81"/>
    </location>
</feature>
<feature type="transmembrane region" description="Helical" evidence="2">
    <location>
        <begin position="90"/>
        <end position="110"/>
    </location>
</feature>
<feature type="transmembrane region" description="Helical" evidence="2">
    <location>
        <begin position="145"/>
        <end position="165"/>
    </location>
</feature>